<feature type="chain" id="PRO_1000016108" description="Aspartyl/glutamyl-tRNA(Asn/Gln) amidotransferase subunit C">
    <location>
        <begin position="1"/>
        <end position="95"/>
    </location>
</feature>
<evidence type="ECO:0000255" key="1">
    <source>
        <dbReference type="HAMAP-Rule" id="MF_00122"/>
    </source>
</evidence>
<keyword id="KW-0067">ATP-binding</keyword>
<keyword id="KW-0436">Ligase</keyword>
<keyword id="KW-0547">Nucleotide-binding</keyword>
<keyword id="KW-0648">Protein biosynthesis</keyword>
<keyword id="KW-1185">Reference proteome</keyword>
<sequence length="95" mass="11224">MSVSKKDVEYVAELARLEFKEEEKDSFVNDLNKILNYMEKLDELNTDDVDIVVNPYYIENKYREDNVEKSMELKEVIDNAPESLEEYVIVPKVID</sequence>
<protein>
    <recommendedName>
        <fullName evidence="1">Aspartyl/glutamyl-tRNA(Asn/Gln) amidotransferase subunit C</fullName>
        <shortName evidence="1">Asp/Glu-ADT subunit C</shortName>
        <ecNumber evidence="1">6.3.5.-</ecNumber>
    </recommendedName>
</protein>
<gene>
    <name evidence="1" type="primary">gatC</name>
    <name type="ordered locus">CBO3267</name>
    <name type="ordered locus">CLC_3210</name>
</gene>
<name>GATC_CLOBH</name>
<comment type="function">
    <text evidence="1">Allows the formation of correctly charged Asn-tRNA(Asn) or Gln-tRNA(Gln) through the transamidation of misacylated Asp-tRNA(Asn) or Glu-tRNA(Gln) in organisms which lack either or both of asparaginyl-tRNA or glutaminyl-tRNA synthetases. The reaction takes place in the presence of glutamine and ATP through an activated phospho-Asp-tRNA(Asn) or phospho-Glu-tRNA(Gln).</text>
</comment>
<comment type="catalytic activity">
    <reaction evidence="1">
        <text>L-glutamyl-tRNA(Gln) + L-glutamine + ATP + H2O = L-glutaminyl-tRNA(Gln) + L-glutamate + ADP + phosphate + H(+)</text>
        <dbReference type="Rhea" id="RHEA:17521"/>
        <dbReference type="Rhea" id="RHEA-COMP:9681"/>
        <dbReference type="Rhea" id="RHEA-COMP:9684"/>
        <dbReference type="ChEBI" id="CHEBI:15377"/>
        <dbReference type="ChEBI" id="CHEBI:15378"/>
        <dbReference type="ChEBI" id="CHEBI:29985"/>
        <dbReference type="ChEBI" id="CHEBI:30616"/>
        <dbReference type="ChEBI" id="CHEBI:43474"/>
        <dbReference type="ChEBI" id="CHEBI:58359"/>
        <dbReference type="ChEBI" id="CHEBI:78520"/>
        <dbReference type="ChEBI" id="CHEBI:78521"/>
        <dbReference type="ChEBI" id="CHEBI:456216"/>
    </reaction>
</comment>
<comment type="catalytic activity">
    <reaction evidence="1">
        <text>L-aspartyl-tRNA(Asn) + L-glutamine + ATP + H2O = L-asparaginyl-tRNA(Asn) + L-glutamate + ADP + phosphate + 2 H(+)</text>
        <dbReference type="Rhea" id="RHEA:14513"/>
        <dbReference type="Rhea" id="RHEA-COMP:9674"/>
        <dbReference type="Rhea" id="RHEA-COMP:9677"/>
        <dbReference type="ChEBI" id="CHEBI:15377"/>
        <dbReference type="ChEBI" id="CHEBI:15378"/>
        <dbReference type="ChEBI" id="CHEBI:29985"/>
        <dbReference type="ChEBI" id="CHEBI:30616"/>
        <dbReference type="ChEBI" id="CHEBI:43474"/>
        <dbReference type="ChEBI" id="CHEBI:58359"/>
        <dbReference type="ChEBI" id="CHEBI:78515"/>
        <dbReference type="ChEBI" id="CHEBI:78516"/>
        <dbReference type="ChEBI" id="CHEBI:456216"/>
    </reaction>
</comment>
<comment type="subunit">
    <text evidence="1">Heterotrimer of A, B and C subunits.</text>
</comment>
<comment type="similarity">
    <text evidence="1">Belongs to the GatC family.</text>
</comment>
<accession>A5I6Z4</accession>
<accession>A7G878</accession>
<dbReference type="EC" id="6.3.5.-" evidence="1"/>
<dbReference type="EMBL" id="CP000727">
    <property type="protein sequence ID" value="ABS37598.1"/>
    <property type="molecule type" value="Genomic_DNA"/>
</dbReference>
<dbReference type="EMBL" id="AM412317">
    <property type="protein sequence ID" value="CAL84826.1"/>
    <property type="molecule type" value="Genomic_DNA"/>
</dbReference>
<dbReference type="RefSeq" id="WP_012048225.1">
    <property type="nucleotide sequence ID" value="NC_009698.1"/>
</dbReference>
<dbReference type="RefSeq" id="YP_001255753.1">
    <property type="nucleotide sequence ID" value="NC_009495.1"/>
</dbReference>
<dbReference type="RefSeq" id="YP_001388993.1">
    <property type="nucleotide sequence ID" value="NC_009698.1"/>
</dbReference>
<dbReference type="SMR" id="A5I6Z4"/>
<dbReference type="GeneID" id="5187522"/>
<dbReference type="KEGG" id="cbh:CLC_3210"/>
<dbReference type="KEGG" id="cbo:CBO3267"/>
<dbReference type="PATRIC" id="fig|413999.7.peg.3243"/>
<dbReference type="HOGENOM" id="CLU_105899_2_1_9"/>
<dbReference type="PRO" id="PR:A5I6Z4"/>
<dbReference type="Proteomes" id="UP000001986">
    <property type="component" value="Chromosome"/>
</dbReference>
<dbReference type="GO" id="GO:0050566">
    <property type="term" value="F:asparaginyl-tRNA synthase (glutamine-hydrolyzing) activity"/>
    <property type="evidence" value="ECO:0007669"/>
    <property type="project" value="RHEA"/>
</dbReference>
<dbReference type="GO" id="GO:0005524">
    <property type="term" value="F:ATP binding"/>
    <property type="evidence" value="ECO:0007669"/>
    <property type="project" value="UniProtKB-KW"/>
</dbReference>
<dbReference type="GO" id="GO:0050567">
    <property type="term" value="F:glutaminyl-tRNA synthase (glutamine-hydrolyzing) activity"/>
    <property type="evidence" value="ECO:0007669"/>
    <property type="project" value="UniProtKB-UniRule"/>
</dbReference>
<dbReference type="GO" id="GO:0070681">
    <property type="term" value="P:glutaminyl-tRNAGln biosynthesis via transamidation"/>
    <property type="evidence" value="ECO:0000318"/>
    <property type="project" value="GO_Central"/>
</dbReference>
<dbReference type="GO" id="GO:0006450">
    <property type="term" value="P:regulation of translational fidelity"/>
    <property type="evidence" value="ECO:0007669"/>
    <property type="project" value="InterPro"/>
</dbReference>
<dbReference type="GO" id="GO:0006412">
    <property type="term" value="P:translation"/>
    <property type="evidence" value="ECO:0007669"/>
    <property type="project" value="UniProtKB-UniRule"/>
</dbReference>
<dbReference type="Gene3D" id="1.10.20.60">
    <property type="entry name" value="Glu-tRNAGln amidotransferase C subunit, N-terminal domain"/>
    <property type="match status" value="1"/>
</dbReference>
<dbReference type="HAMAP" id="MF_00122">
    <property type="entry name" value="GatC"/>
    <property type="match status" value="1"/>
</dbReference>
<dbReference type="InterPro" id="IPR036113">
    <property type="entry name" value="Asp/Glu-ADT_sf_sub_c"/>
</dbReference>
<dbReference type="InterPro" id="IPR003837">
    <property type="entry name" value="GatC"/>
</dbReference>
<dbReference type="NCBIfam" id="TIGR00135">
    <property type="entry name" value="gatC"/>
    <property type="match status" value="1"/>
</dbReference>
<dbReference type="PANTHER" id="PTHR15004">
    <property type="entry name" value="GLUTAMYL-TRNA(GLN) AMIDOTRANSFERASE SUBUNIT C, MITOCHONDRIAL"/>
    <property type="match status" value="1"/>
</dbReference>
<dbReference type="PANTHER" id="PTHR15004:SF0">
    <property type="entry name" value="GLUTAMYL-TRNA(GLN) AMIDOTRANSFERASE SUBUNIT C, MITOCHONDRIAL"/>
    <property type="match status" value="1"/>
</dbReference>
<dbReference type="Pfam" id="PF02686">
    <property type="entry name" value="GatC"/>
    <property type="match status" value="1"/>
</dbReference>
<dbReference type="SUPFAM" id="SSF141000">
    <property type="entry name" value="Glu-tRNAGln amidotransferase C subunit"/>
    <property type="match status" value="1"/>
</dbReference>
<proteinExistence type="inferred from homology"/>
<organism>
    <name type="scientific">Clostridium botulinum (strain Hall / ATCC 3502 / NCTC 13319 / Type A)</name>
    <dbReference type="NCBI Taxonomy" id="441771"/>
    <lineage>
        <taxon>Bacteria</taxon>
        <taxon>Bacillati</taxon>
        <taxon>Bacillota</taxon>
        <taxon>Clostridia</taxon>
        <taxon>Eubacteriales</taxon>
        <taxon>Clostridiaceae</taxon>
        <taxon>Clostridium</taxon>
    </lineage>
</organism>
<reference key="1">
    <citation type="journal article" date="2007" name="Genome Res.">
        <title>Genome sequence of a proteolytic (Group I) Clostridium botulinum strain Hall A and comparative analysis of the clostridial genomes.</title>
        <authorList>
            <person name="Sebaihia M."/>
            <person name="Peck M.W."/>
            <person name="Minton N.P."/>
            <person name="Thomson N.R."/>
            <person name="Holden M.T.G."/>
            <person name="Mitchell W.J."/>
            <person name="Carter A.T."/>
            <person name="Bentley S.D."/>
            <person name="Mason D.R."/>
            <person name="Crossman L."/>
            <person name="Paul C.J."/>
            <person name="Ivens A."/>
            <person name="Wells-Bennik M.H.J."/>
            <person name="Davis I.J."/>
            <person name="Cerdeno-Tarraga A.M."/>
            <person name="Churcher C."/>
            <person name="Quail M.A."/>
            <person name="Chillingworth T."/>
            <person name="Feltwell T."/>
            <person name="Fraser A."/>
            <person name="Goodhead I."/>
            <person name="Hance Z."/>
            <person name="Jagels K."/>
            <person name="Larke N."/>
            <person name="Maddison M."/>
            <person name="Moule S."/>
            <person name="Mungall K."/>
            <person name="Norbertczak H."/>
            <person name="Rabbinowitsch E."/>
            <person name="Sanders M."/>
            <person name="Simmonds M."/>
            <person name="White B."/>
            <person name="Whithead S."/>
            <person name="Parkhill J."/>
        </authorList>
    </citation>
    <scope>NUCLEOTIDE SEQUENCE [LARGE SCALE GENOMIC DNA]</scope>
    <source>
        <strain>Hall / ATCC 3502 / NCTC 13319 / Type A</strain>
    </source>
</reference>
<reference key="2">
    <citation type="journal article" date="2007" name="PLoS ONE">
        <title>Analysis of the neurotoxin complex genes in Clostridium botulinum A1-A4 and B1 strains: BoNT/A3, /Ba4 and /B1 clusters are located within plasmids.</title>
        <authorList>
            <person name="Smith T.J."/>
            <person name="Hill K.K."/>
            <person name="Foley B.T."/>
            <person name="Detter J.C."/>
            <person name="Munk A.C."/>
            <person name="Bruce D.C."/>
            <person name="Doggett N.A."/>
            <person name="Smith L.A."/>
            <person name="Marks J.D."/>
            <person name="Xie G."/>
            <person name="Brettin T.S."/>
        </authorList>
    </citation>
    <scope>NUCLEOTIDE SEQUENCE [LARGE SCALE GENOMIC DNA]</scope>
    <source>
        <strain>Hall / ATCC 3502 / NCTC 13319 / Type A</strain>
    </source>
</reference>